<sequence length="47" mass="5286">DLRQCTRNAPGSTWGRCCLNPMCGNFCCPRSGCTCAYNWRRGIYCSC</sequence>
<organism>
    <name type="scientific">Conus vexillum</name>
    <name type="common">Flag cone</name>
    <dbReference type="NCBI Taxonomy" id="89431"/>
    <lineage>
        <taxon>Eukaryota</taxon>
        <taxon>Metazoa</taxon>
        <taxon>Spiralia</taxon>
        <taxon>Lophotrochozoa</taxon>
        <taxon>Mollusca</taxon>
        <taxon>Gastropoda</taxon>
        <taxon>Caenogastropoda</taxon>
        <taxon>Neogastropoda</taxon>
        <taxon>Conoidea</taxon>
        <taxon>Conidae</taxon>
        <taxon>Conus</taxon>
        <taxon>Rhizoconus</taxon>
    </lineage>
</organism>
<reference key="1">
    <citation type="journal article" date="2006" name="J. Biol. Chem.">
        <title>Identification of a novel class of nicotinic receptor antagonists: dimeric conotoxins VxXIIA, VxXIIB and VxXIIC from Conus vexillum.</title>
        <authorList>
            <person name="Loughnan M."/>
            <person name="Nicke A."/>
            <person name="Jones A."/>
            <person name="Schroeder C.I."/>
            <person name="Nevin S.T."/>
            <person name="Adams D.J."/>
            <person name="Alewood P.F."/>
            <person name="Lewis R.J."/>
        </authorList>
    </citation>
    <scope>PROTEIN SEQUENCE</scope>
    <scope>HYDROXYLATION AT PRO-10; PRO-21 AND PRO-29</scope>
    <scope>MASS SPECTROMETRY</scope>
    <scope>SUBUNIT</scope>
    <scope>FUNCTION</scope>
    <source>
        <tissue>Venom</tissue>
    </source>
</reference>
<reference key="2">
    <citation type="journal article" date="2009" name="Biochemistry">
        <title>Novel alpha D-conopeptides and their precursors identified by cDNA cloning define the D-conotoxin superfamily.</title>
        <authorList>
            <person name="Loughnan M.L."/>
            <person name="Nicke A."/>
            <person name="Lawrence N."/>
            <person name="Lewis R.J."/>
        </authorList>
    </citation>
    <scope>NOMENCLATURE</scope>
</reference>
<name>CDKC_CONVX</name>
<protein>
    <recommendedName>
        <fullName evidence="5">Alpha-conotoxin VxXXC</fullName>
    </recommendedName>
    <alternativeName>
        <fullName evidence="5">VxXIIC</fullName>
    </alternativeName>
</protein>
<accession>P0C1W7</accession>
<keyword id="KW-0008">Acetylcholine receptor inhibiting toxin</keyword>
<keyword id="KW-0903">Direct protein sequencing</keyword>
<keyword id="KW-1015">Disulfide bond</keyword>
<keyword id="KW-0379">Hydroxylation</keyword>
<keyword id="KW-0872">Ion channel impairing toxin</keyword>
<keyword id="KW-0528">Neurotoxin</keyword>
<keyword id="KW-0629">Postsynaptic neurotoxin</keyword>
<keyword id="KW-0964">Secreted</keyword>
<keyword id="KW-0800">Toxin</keyword>
<dbReference type="SMR" id="P0C1W7"/>
<dbReference type="ConoServer" id="1684">
    <property type="toxin name" value="VxXXC"/>
</dbReference>
<dbReference type="GO" id="GO:0005576">
    <property type="term" value="C:extracellular region"/>
    <property type="evidence" value="ECO:0007669"/>
    <property type="project" value="UniProtKB-SubCell"/>
</dbReference>
<dbReference type="GO" id="GO:0035792">
    <property type="term" value="C:host cell postsynaptic membrane"/>
    <property type="evidence" value="ECO:0007669"/>
    <property type="project" value="UniProtKB-KW"/>
</dbReference>
<dbReference type="GO" id="GO:0030550">
    <property type="term" value="F:acetylcholine receptor inhibitor activity"/>
    <property type="evidence" value="ECO:0007669"/>
    <property type="project" value="UniProtKB-KW"/>
</dbReference>
<dbReference type="GO" id="GO:0099106">
    <property type="term" value="F:ion channel regulator activity"/>
    <property type="evidence" value="ECO:0007669"/>
    <property type="project" value="UniProtKB-KW"/>
</dbReference>
<dbReference type="GO" id="GO:0090729">
    <property type="term" value="F:toxin activity"/>
    <property type="evidence" value="ECO:0007669"/>
    <property type="project" value="UniProtKB-KW"/>
</dbReference>
<comment type="function">
    <text evidence="3 4">Alpha-conotoxins act on postsynaptic membranes, they bind to the nicotinic acetylcholine receptors (nAChR) and thus inhibit them. Through its two C-terminal domains, this homodimeric protein would bind to two nAChR allosteric sites, located outside the nAChR C-loop of the principal binding face and at the adjacent binding interface in a clockwise direction (By similarity). This toxin specifically blocks mammalian neuronal nAChR of the alpha-7/CHRNA7, alpha-3-beta-2/CHRNA3-CHRNB2 and alpha-4-beta-2/CHRNA4-CHRNB2 subtypes (PubMed:16790424). VxXXA and VxXXB inhibit alpha-7/CHRNA7 and alpha-3-beta-2/CHRNA3-CHRNB2 nAChR more efficiently than VxXXC (PubMed:16790424). VxXXB is the most effective at inhibiting alpha-4-beta-2/CHRNA4-CHRNB2 nAChR, followed by VxXXC and VxXXA (PubMed:16790424).</text>
</comment>
<comment type="subunit">
    <text evidence="2 4">Homodimer (PubMed:16790424). Pseudo-homodimer (identical sequence, different post-translational modifications) (By similarity).</text>
</comment>
<comment type="subcellular location">
    <subcellularLocation>
        <location evidence="4">Secreted</location>
    </subcellularLocation>
</comment>
<comment type="tissue specificity">
    <text evidence="7">Expressed by the venom duct.</text>
</comment>
<comment type="domain">
    <text>The cysteine framework is XX (C-CC-C-CC-C-C-C-C).</text>
</comment>
<comment type="domain">
    <text evidence="3">Displays a mini-granulin fold, a structure composed of two short, stacked beta-hairpins connected by two parallel disulfide bonds. This newly described fold is derived from the same cysteine connectivity as knottins (ICK fold). The name 'mini-granulin fold' comes from the structural homology with the N-terminal region of the human granulin.</text>
</comment>
<comment type="PTM">
    <text>HydroxyPro-10 is only found in a minor form.</text>
</comment>
<comment type="mass spectrometry" mass="5282.4" method="Electrospray" evidence="4"/>
<comment type="similarity">
    <text evidence="6">Belongs to the conotoxin D superfamily.</text>
</comment>
<evidence type="ECO:0000250" key="1">
    <source>
        <dbReference type="UniProtKB" id="A0A0A0VBX4"/>
    </source>
</evidence>
<evidence type="ECO:0000250" key="2">
    <source>
        <dbReference type="UniProtKB" id="P0C1W5"/>
    </source>
</evidence>
<evidence type="ECO:0000250" key="3">
    <source>
        <dbReference type="UniProtKB" id="P0C1W6"/>
    </source>
</evidence>
<evidence type="ECO:0000269" key="4">
    <source>
    </source>
</evidence>
<evidence type="ECO:0000303" key="5">
    <source>
    </source>
</evidence>
<evidence type="ECO:0000305" key="6"/>
<evidence type="ECO:0000305" key="7">
    <source>
    </source>
</evidence>
<feature type="chain" id="PRO_0000249796" description="Alpha-conotoxin VxXXC">
    <location>
        <begin position="1"/>
        <end position="47"/>
    </location>
</feature>
<feature type="modified residue" description="Hydroxyproline; partial" evidence="4">
    <location>
        <position position="10"/>
    </location>
</feature>
<feature type="modified residue" description="Hydroxyproline; partial" evidence="7">
    <location>
        <position position="21"/>
    </location>
</feature>
<feature type="modified residue" description="Hydroxyproline; partial" evidence="7">
    <location>
        <position position="29"/>
    </location>
</feature>
<feature type="disulfide bond" description="Interchain (with C-63)" evidence="1">
    <location>
        <position position="5"/>
    </location>
</feature>
<feature type="disulfide bond" description="Interchain (with C-51)" evidence="1">
    <location>
        <position position="17"/>
    </location>
</feature>
<feature type="disulfide bond" evidence="1">
    <location>
        <begin position="18"/>
        <end position="27"/>
    </location>
</feature>
<feature type="disulfide bond" evidence="1">
    <location>
        <begin position="23"/>
        <end position="35"/>
    </location>
</feature>
<feature type="disulfide bond" evidence="1">
    <location>
        <begin position="28"/>
        <end position="45"/>
    </location>
</feature>
<feature type="disulfide bond" evidence="1">
    <location>
        <begin position="33"/>
        <end position="47"/>
    </location>
</feature>
<proteinExistence type="evidence at protein level"/>